<keyword id="KW-1064">Adaptive immunity</keyword>
<keyword id="KW-1003">Cell membrane</keyword>
<keyword id="KW-1015">Disulfide bond</keyword>
<keyword id="KW-0391">Immunity</keyword>
<keyword id="KW-1280">Immunoglobulin</keyword>
<keyword id="KW-0393">Immunoglobulin domain</keyword>
<keyword id="KW-0472">Membrane</keyword>
<keyword id="KW-1267">Proteomics identification</keyword>
<keyword id="KW-1185">Reference proteome</keyword>
<keyword id="KW-0964">Secreted</keyword>
<keyword id="KW-0732">Signal</keyword>
<reference key="1">
    <citation type="journal article" date="1999" name="Nature">
        <title>The DNA sequence of human chromosome 22.</title>
        <authorList>
            <person name="Dunham I."/>
            <person name="Hunt A.R."/>
            <person name="Collins J.E."/>
            <person name="Bruskiewich R."/>
            <person name="Beare D.M."/>
            <person name="Clamp M."/>
            <person name="Smink L.J."/>
            <person name="Ainscough R."/>
            <person name="Almeida J.P."/>
            <person name="Babbage A.K."/>
            <person name="Bagguley C."/>
            <person name="Bailey J."/>
            <person name="Barlow K.F."/>
            <person name="Bates K.N."/>
            <person name="Beasley O.P."/>
            <person name="Bird C.P."/>
            <person name="Blakey S.E."/>
            <person name="Bridgeman A.M."/>
            <person name="Buck D."/>
            <person name="Burgess J."/>
            <person name="Burrill W.D."/>
            <person name="Burton J."/>
            <person name="Carder C."/>
            <person name="Carter N.P."/>
            <person name="Chen Y."/>
            <person name="Clark G."/>
            <person name="Clegg S.M."/>
            <person name="Cobley V.E."/>
            <person name="Cole C.G."/>
            <person name="Collier R.E."/>
            <person name="Connor R."/>
            <person name="Conroy D."/>
            <person name="Corby N.R."/>
            <person name="Coville G.J."/>
            <person name="Cox A.V."/>
            <person name="Davis J."/>
            <person name="Dawson E."/>
            <person name="Dhami P.D."/>
            <person name="Dockree C."/>
            <person name="Dodsworth S.J."/>
            <person name="Durbin R.M."/>
            <person name="Ellington A.G."/>
            <person name="Evans K.L."/>
            <person name="Fey J.M."/>
            <person name="Fleming K."/>
            <person name="French L."/>
            <person name="Garner A.A."/>
            <person name="Gilbert J.G.R."/>
            <person name="Goward M.E."/>
            <person name="Grafham D.V."/>
            <person name="Griffiths M.N.D."/>
            <person name="Hall C."/>
            <person name="Hall R.E."/>
            <person name="Hall-Tamlyn G."/>
            <person name="Heathcott R.W."/>
            <person name="Ho S."/>
            <person name="Holmes S."/>
            <person name="Hunt S.E."/>
            <person name="Jones M.C."/>
            <person name="Kershaw J."/>
            <person name="Kimberley A.M."/>
            <person name="King A."/>
            <person name="Laird G.K."/>
            <person name="Langford C.F."/>
            <person name="Leversha M.A."/>
            <person name="Lloyd C."/>
            <person name="Lloyd D.M."/>
            <person name="Martyn I.D."/>
            <person name="Mashreghi-Mohammadi M."/>
            <person name="Matthews L.H."/>
            <person name="Mccann O.T."/>
            <person name="Mcclay J."/>
            <person name="Mclaren S."/>
            <person name="McMurray A.A."/>
            <person name="Milne S.A."/>
            <person name="Mortimore B.J."/>
            <person name="Odell C.N."/>
            <person name="Pavitt R."/>
            <person name="Pearce A.V."/>
            <person name="Pearson D."/>
            <person name="Phillimore B.J.C.T."/>
            <person name="Phillips S.H."/>
            <person name="Plumb R.W."/>
            <person name="Ramsay H."/>
            <person name="Ramsey Y."/>
            <person name="Rogers L."/>
            <person name="Ross M.T."/>
            <person name="Scott C.E."/>
            <person name="Sehra H.K."/>
            <person name="Skuce C.D."/>
            <person name="Smalley S."/>
            <person name="Smith M.L."/>
            <person name="Soderlund C."/>
            <person name="Spragon L."/>
            <person name="Steward C.A."/>
            <person name="Sulston J.E."/>
            <person name="Swann R.M."/>
            <person name="Vaudin M."/>
            <person name="Wall M."/>
            <person name="Wallis J.M."/>
            <person name="Whiteley M.N."/>
            <person name="Willey D.L."/>
            <person name="Williams L."/>
            <person name="Williams S.A."/>
            <person name="Williamson H."/>
            <person name="Wilmer T.E."/>
            <person name="Wilming L."/>
            <person name="Wright C.L."/>
            <person name="Hubbard T."/>
            <person name="Bentley D.R."/>
            <person name="Beck S."/>
            <person name="Rogers J."/>
            <person name="Shimizu N."/>
            <person name="Minoshima S."/>
            <person name="Kawasaki K."/>
            <person name="Sasaki T."/>
            <person name="Asakawa S."/>
            <person name="Kudoh J."/>
            <person name="Shintani A."/>
            <person name="Shibuya K."/>
            <person name="Yoshizaki Y."/>
            <person name="Aoki N."/>
            <person name="Mitsuyama S."/>
            <person name="Roe B.A."/>
            <person name="Chen F."/>
            <person name="Chu L."/>
            <person name="Crabtree J."/>
            <person name="Deschamps S."/>
            <person name="Do A."/>
            <person name="Do T."/>
            <person name="Dorman A."/>
            <person name="Fang F."/>
            <person name="Fu Y."/>
            <person name="Hu P."/>
            <person name="Hua A."/>
            <person name="Kenton S."/>
            <person name="Lai H."/>
            <person name="Lao H.I."/>
            <person name="Lewis J."/>
            <person name="Lewis S."/>
            <person name="Lin S.-P."/>
            <person name="Loh P."/>
            <person name="Malaj E."/>
            <person name="Nguyen T."/>
            <person name="Pan H."/>
            <person name="Phan S."/>
            <person name="Qi S."/>
            <person name="Qian Y."/>
            <person name="Ray L."/>
            <person name="Ren Q."/>
            <person name="Shaull S."/>
            <person name="Sloan D."/>
            <person name="Song L."/>
            <person name="Wang Q."/>
            <person name="Wang Y."/>
            <person name="Wang Z."/>
            <person name="White J."/>
            <person name="Willingham D."/>
            <person name="Wu H."/>
            <person name="Yao Z."/>
            <person name="Zhan M."/>
            <person name="Zhang G."/>
            <person name="Chissoe S."/>
            <person name="Murray J."/>
            <person name="Miller N."/>
            <person name="Minx P."/>
            <person name="Fulton R."/>
            <person name="Johnson D."/>
            <person name="Bemis G."/>
            <person name="Bentley D."/>
            <person name="Bradshaw H."/>
            <person name="Bourne S."/>
            <person name="Cordes M."/>
            <person name="Du Z."/>
            <person name="Fulton L."/>
            <person name="Goela D."/>
            <person name="Graves T."/>
            <person name="Hawkins J."/>
            <person name="Hinds K."/>
            <person name="Kemp K."/>
            <person name="Latreille P."/>
            <person name="Layman D."/>
            <person name="Ozersky P."/>
            <person name="Rohlfing T."/>
            <person name="Scheet P."/>
            <person name="Walker C."/>
            <person name="Wamsley A."/>
            <person name="Wohldmann P."/>
            <person name="Pepin K."/>
            <person name="Nelson J."/>
            <person name="Korf I."/>
            <person name="Bedell J.A."/>
            <person name="Hillier L.W."/>
            <person name="Mardis E."/>
            <person name="Waterston R."/>
            <person name="Wilson R."/>
            <person name="Emanuel B.S."/>
            <person name="Shaikh T."/>
            <person name="Kurahashi H."/>
            <person name="Saitta S."/>
            <person name="Budarf M.L."/>
            <person name="McDermid H.E."/>
            <person name="Johnson A."/>
            <person name="Wong A.C.C."/>
            <person name="Morrow B.E."/>
            <person name="Edelmann L."/>
            <person name="Kim U.J."/>
            <person name="Shizuya H."/>
            <person name="Simon M.I."/>
            <person name="Dumanski J.P."/>
            <person name="Peyrard M."/>
            <person name="Kedra D."/>
            <person name="Seroussi E."/>
            <person name="Fransson I."/>
            <person name="Tapia I."/>
            <person name="Bruder C.E."/>
            <person name="O'Brien K.P."/>
            <person name="Wilkinson P."/>
            <person name="Bodenteich A."/>
            <person name="Hartman K."/>
            <person name="Hu X."/>
            <person name="Khan A.S."/>
            <person name="Lane L."/>
            <person name="Tilahun Y."/>
            <person name="Wright H."/>
        </authorList>
    </citation>
    <scope>NUCLEOTIDE SEQUENCE [LARGE SCALE GENOMIC DNA] (IMGT ALLELE IGLV4-3*01)</scope>
</reference>
<reference key="2">
    <citation type="journal article" date="2001" name="Exp. Clin. Immunogenet.">
        <title>Nomenclature of the human immunoglobulin lambda (IGL) genes.</title>
        <authorList>
            <person name="Lefranc M.P."/>
        </authorList>
    </citation>
    <scope>NOMENCLATURE</scope>
</reference>
<reference key="3">
    <citation type="book" date="2001" name="The Immunoglobulin FactsBook.">
        <title>The Immunoglobulin FactsBook.</title>
        <editorList>
            <person name="Lefranc M.P."/>
            <person name="Lefranc G."/>
        </editorList>
        <authorList>
            <person name="Lefranc M.P."/>
            <person name="Lefranc G."/>
        </authorList>
    </citation>
    <scope>NOMENCLATURE</scope>
</reference>
<reference key="4">
    <citation type="journal article" date="2007" name="Annu. Rev. Genet.">
        <title>Immunoglobulin somatic hypermutation.</title>
        <authorList>
            <person name="Teng G."/>
            <person name="Papavasiliou F.N."/>
        </authorList>
    </citation>
    <scope>REVIEW ON SOMATIC HYPERMUTATION</scope>
</reference>
<reference key="5">
    <citation type="journal article" date="2010" name="J. Allergy Clin. Immunol.">
        <title>Structure and function of immunoglobulins.</title>
        <authorList>
            <person name="Schroeder H.W. Jr."/>
            <person name="Cavacini L."/>
        </authorList>
    </citation>
    <scope>REVIEW ON IMMUNOGLOBULINS</scope>
</reference>
<reference key="6">
    <citation type="journal article" date="2012" name="Nat. Rev. Immunol.">
        <title>Molecular programming of B cell memory.</title>
        <authorList>
            <person name="McHeyzer-Williams M."/>
            <person name="Okitsu S."/>
            <person name="Wang N."/>
            <person name="McHeyzer-Williams L."/>
        </authorList>
    </citation>
    <scope>REVIEW ON FUNCTION</scope>
</reference>
<reference key="7">
    <citation type="journal article" date="2014" name="Front. Immunol.">
        <title>Immunoglobulin and T Cell Receptor Genes: IMGT((R)) and the Birth and Rise of Immunoinformatics.</title>
        <authorList>
            <person name="Lefranc M.P."/>
        </authorList>
    </citation>
    <scope>NOMENCLATURE</scope>
</reference>
<comment type="function">
    <text evidence="5 6 7 8">V region of the variable domain of immunoglobulin light chains that participates in the antigen recognition (PubMed:24600447). Immunoglobulins, also known as antibodies, are membrane-bound or secreted glycoproteins produced by B lymphocytes. In the recognition phase of humoral immunity, the membrane-bound immunoglobulins serve as receptors which, upon binding of a specific antigen, trigger the clonal expansion and differentiation of B lymphocytes into immunoglobulins-secreting plasma cells. Secreted immunoglobulins mediate the effector phase of humoral immunity, which results in the elimination of bound antigens (PubMed:20176268, PubMed:22158414). The antigen binding site is formed by the variable domain of one heavy chain, together with that of its associated light chain. Thus, each immunoglobulin has two antigen binding sites with remarkable affinity for a particular antigen. The variable domains are assembled by a process called V-(D)-J rearrangement and can then be subjected to somatic hypermutations which, after exposure to antigen and selection, allow affinity maturation for a particular antigen (PubMed:17576170, PubMed:20176268).</text>
</comment>
<comment type="subunit">
    <text evidence="6">Immunoglobulins are composed of two identical heavy chains and two identical light chains; disulfide-linked.</text>
</comment>
<comment type="subcellular location">
    <subcellularLocation>
        <location evidence="6 7">Secreted</location>
    </subcellularLocation>
    <subcellularLocation>
        <location evidence="6 7">Cell membrane</location>
    </subcellularLocation>
</comment>
<comment type="polymorphism">
    <text>There are several alleles. The sequence shown is that of IMGT allele IGLV4-3*01.</text>
</comment>
<comment type="caution">
    <text evidence="10">For an example of a full-length immunoglobulin lambda light chain see AC P0DOX8.</text>
</comment>
<accession>A0A075B6K6</accession>
<sequence>MAWVSFYLLPFIFSTGLCALPVLTQPPSASALLGASIKLTCTLSSEHSTYTIEWYQQRPGRSPQYIMKVKSDGSHSKGDGIPDRFMGSSSGADRYLTFSNLQSDDEAEYHCGESHTIDGQVG</sequence>
<feature type="signal peptide" evidence="2">
    <location>
        <begin position="1"/>
        <end position="19"/>
    </location>
</feature>
<feature type="chain" id="PRO_5001705257" description="Immunoglobulin lambda variable 4-3" evidence="2">
    <location>
        <begin position="20"/>
        <end position="122"/>
    </location>
</feature>
<feature type="domain" description="Ig-like" evidence="3">
    <location>
        <begin position="21"/>
        <end position="122" status="greater than"/>
    </location>
</feature>
<feature type="region of interest" description="Framework-1" evidence="1">
    <location>
        <begin position="20"/>
        <end position="44"/>
    </location>
</feature>
<feature type="region of interest" description="Complementarity-determining-1" evidence="1">
    <location>
        <begin position="45"/>
        <end position="51"/>
    </location>
</feature>
<feature type="region of interest" description="Framework-2" evidence="1">
    <location>
        <begin position="52"/>
        <end position="68"/>
    </location>
</feature>
<feature type="region of interest" description="Complementarity-determining-2" evidence="1">
    <location>
        <begin position="69"/>
        <end position="75"/>
    </location>
</feature>
<feature type="region of interest" description="Framework-3" evidence="1">
    <location>
        <begin position="76"/>
        <end position="111"/>
    </location>
</feature>
<feature type="region of interest" description="Complementarity-determining-3" evidence="1">
    <location>
        <begin position="112"/>
        <end position="122" status="greater than"/>
    </location>
</feature>
<feature type="disulfide bond" evidence="3">
    <location>
        <begin position="41"/>
        <end position="111"/>
    </location>
</feature>
<feature type="non-terminal residue">
    <location>
        <position position="122"/>
    </location>
</feature>
<organism>
    <name type="scientific">Homo sapiens</name>
    <name type="common">Human</name>
    <dbReference type="NCBI Taxonomy" id="9606"/>
    <lineage>
        <taxon>Eukaryota</taxon>
        <taxon>Metazoa</taxon>
        <taxon>Chordata</taxon>
        <taxon>Craniata</taxon>
        <taxon>Vertebrata</taxon>
        <taxon>Euteleostomi</taxon>
        <taxon>Mammalia</taxon>
        <taxon>Eutheria</taxon>
        <taxon>Euarchontoglires</taxon>
        <taxon>Primates</taxon>
        <taxon>Haplorrhini</taxon>
        <taxon>Catarrhini</taxon>
        <taxon>Hominidae</taxon>
        <taxon>Homo</taxon>
    </lineage>
</organism>
<protein>
    <recommendedName>
        <fullName evidence="4 9">Immunoglobulin lambda variable 4-3</fullName>
    </recommendedName>
</protein>
<dbReference type="EMBL" id="AC245028">
    <property type="status" value="NOT_ANNOTATED_CDS"/>
    <property type="molecule type" value="Genomic_DNA"/>
</dbReference>
<dbReference type="SMR" id="A0A075B6K6"/>
<dbReference type="FunCoup" id="A0A075B6K6">
    <property type="interactions" value="167"/>
</dbReference>
<dbReference type="IMGT_GENE-DB" id="IGLV4-3"/>
<dbReference type="BioMuta" id="IGLV4-3"/>
<dbReference type="MassIVE" id="A0A075B6K6"/>
<dbReference type="Ensembl" id="ENST00000390318.2">
    <property type="protein sequence ID" value="ENSP00000374853.2"/>
    <property type="gene ID" value="ENSG00000211672.2"/>
</dbReference>
<dbReference type="UCSC" id="uc062cdn.1">
    <property type="organism name" value="human"/>
</dbReference>
<dbReference type="AGR" id="HGNC:5919"/>
<dbReference type="GeneCards" id="IGLV4-3"/>
<dbReference type="HGNC" id="HGNC:5919">
    <property type="gene designation" value="IGLV4-3"/>
</dbReference>
<dbReference type="HPA" id="ENSG00000211672">
    <property type="expression patterns" value="Group enriched (lymphoid tissue, stomach)"/>
</dbReference>
<dbReference type="neXtProt" id="NX_A0A075B6K6"/>
<dbReference type="OpenTargets" id="ENSG00000211672"/>
<dbReference type="VEuPathDB" id="HostDB:ENSG00000211672"/>
<dbReference type="GeneTree" id="ENSGT00940000153934"/>
<dbReference type="HOGENOM" id="CLU_077975_4_0_1"/>
<dbReference type="InParanoid" id="A0A075B6K6"/>
<dbReference type="OMA" id="RYIMKVN"/>
<dbReference type="OrthoDB" id="9838202at2759"/>
<dbReference type="PAN-GO" id="A0A075B6K6">
    <property type="GO annotations" value="3 GO annotations based on evolutionary models"/>
</dbReference>
<dbReference type="PhylomeDB" id="A0A075B6K6"/>
<dbReference type="SignaLink" id="A0A075B6K6"/>
<dbReference type="Pharos" id="A0A075B6K6">
    <property type="development level" value="Tdark"/>
</dbReference>
<dbReference type="PRO" id="PR:A0A075B6K6"/>
<dbReference type="Proteomes" id="UP000005640">
    <property type="component" value="Chromosome 22"/>
</dbReference>
<dbReference type="RNAct" id="A0A075B6K6">
    <property type="molecule type" value="protein"/>
</dbReference>
<dbReference type="Bgee" id="ENSG00000211672">
    <property type="expression patterns" value="Expressed in tendon of biceps brachii and 106 other cell types or tissues"/>
</dbReference>
<dbReference type="GO" id="GO:0005576">
    <property type="term" value="C:extracellular region"/>
    <property type="evidence" value="ECO:0007669"/>
    <property type="project" value="UniProtKB-SubCell"/>
</dbReference>
<dbReference type="GO" id="GO:0019814">
    <property type="term" value="C:immunoglobulin complex"/>
    <property type="evidence" value="ECO:0000318"/>
    <property type="project" value="GO_Central"/>
</dbReference>
<dbReference type="GO" id="GO:0005886">
    <property type="term" value="C:plasma membrane"/>
    <property type="evidence" value="ECO:0007669"/>
    <property type="project" value="UniProtKB-SubCell"/>
</dbReference>
<dbReference type="GO" id="GO:0002250">
    <property type="term" value="P:adaptive immune response"/>
    <property type="evidence" value="ECO:0007669"/>
    <property type="project" value="UniProtKB-KW"/>
</dbReference>
<dbReference type="GO" id="GO:0006955">
    <property type="term" value="P:immune response"/>
    <property type="evidence" value="ECO:0000318"/>
    <property type="project" value="GO_Central"/>
</dbReference>
<dbReference type="FunFam" id="2.60.40.10:FF:001671">
    <property type="entry name" value="Immunoglobulin lambda variable 4-69"/>
    <property type="match status" value="1"/>
</dbReference>
<dbReference type="Gene3D" id="2.60.40.10">
    <property type="entry name" value="Immunoglobulins"/>
    <property type="match status" value="1"/>
</dbReference>
<dbReference type="InterPro" id="IPR007110">
    <property type="entry name" value="Ig-like_dom"/>
</dbReference>
<dbReference type="InterPro" id="IPR036179">
    <property type="entry name" value="Ig-like_dom_sf"/>
</dbReference>
<dbReference type="InterPro" id="IPR013783">
    <property type="entry name" value="Ig-like_fold"/>
</dbReference>
<dbReference type="InterPro" id="IPR003599">
    <property type="entry name" value="Ig_sub"/>
</dbReference>
<dbReference type="InterPro" id="IPR013106">
    <property type="entry name" value="Ig_V-set"/>
</dbReference>
<dbReference type="InterPro" id="IPR050150">
    <property type="entry name" value="IgV_Light_Chain"/>
</dbReference>
<dbReference type="PANTHER" id="PTHR23267">
    <property type="entry name" value="IMMUNOGLOBULIN LIGHT CHAIN"/>
    <property type="match status" value="1"/>
</dbReference>
<dbReference type="Pfam" id="PF07686">
    <property type="entry name" value="V-set"/>
    <property type="match status" value="1"/>
</dbReference>
<dbReference type="SMART" id="SM00409">
    <property type="entry name" value="IG"/>
    <property type="match status" value="1"/>
</dbReference>
<dbReference type="SMART" id="SM00406">
    <property type="entry name" value="IGv"/>
    <property type="match status" value="1"/>
</dbReference>
<dbReference type="SUPFAM" id="SSF48726">
    <property type="entry name" value="Immunoglobulin"/>
    <property type="match status" value="1"/>
</dbReference>
<dbReference type="PROSITE" id="PS50835">
    <property type="entry name" value="IG_LIKE"/>
    <property type="match status" value="1"/>
</dbReference>
<name>LV403_HUMAN</name>
<proteinExistence type="evidence at protein level"/>
<evidence type="ECO:0000250" key="1">
    <source>
        <dbReference type="UniProtKB" id="P01721"/>
    </source>
</evidence>
<evidence type="ECO:0000255" key="2"/>
<evidence type="ECO:0000255" key="3">
    <source>
        <dbReference type="PROSITE-ProRule" id="PRU00114"/>
    </source>
</evidence>
<evidence type="ECO:0000303" key="4">
    <source>
    </source>
</evidence>
<evidence type="ECO:0000303" key="5">
    <source>
    </source>
</evidence>
<evidence type="ECO:0000303" key="6">
    <source>
    </source>
</evidence>
<evidence type="ECO:0000303" key="7">
    <source>
    </source>
</evidence>
<evidence type="ECO:0000303" key="8">
    <source>
    </source>
</evidence>
<evidence type="ECO:0000303" key="9">
    <source ref="3"/>
</evidence>
<evidence type="ECO:0000305" key="10"/>
<gene>
    <name evidence="4 9" type="primary">IGLV4-3</name>
</gene>